<keyword id="KW-0472">Membrane</keyword>
<keyword id="KW-0479">Metal-binding</keyword>
<keyword id="KW-0576">Peroxisome</keyword>
<keyword id="KW-0653">Protein transport</keyword>
<keyword id="KW-1185">Reference proteome</keyword>
<keyword id="KW-0812">Transmembrane</keyword>
<keyword id="KW-1133">Transmembrane helix</keyword>
<keyword id="KW-0813">Transport</keyword>
<keyword id="KW-0833">Ubl conjugation pathway</keyword>
<keyword id="KW-0862">Zinc</keyword>
<keyword id="KW-0863">Zinc-finger</keyword>
<feature type="chain" id="PRO_0000456990" description="Peroxisome assembly protein 12-B">
    <location>
        <begin position="1"/>
        <end position="353"/>
    </location>
</feature>
<feature type="topological domain" description="Peroxisomal matrix" evidence="1">
    <location>
        <begin position="1"/>
        <end position="19"/>
    </location>
</feature>
<feature type="transmembrane region" description="Helical; Name=TM1" evidence="1">
    <location>
        <begin position="20"/>
        <end position="47"/>
    </location>
</feature>
<feature type="topological domain" description="Cytoplasmic" evidence="1">
    <location>
        <begin position="48"/>
        <end position="51"/>
    </location>
</feature>
<feature type="transmembrane region" description="Helical; Name=TM2" evidence="1">
    <location>
        <begin position="52"/>
        <end position="76"/>
    </location>
</feature>
<feature type="topological domain" description="Peroxisomal matrix" evidence="1">
    <location>
        <begin position="77"/>
        <end position="104"/>
    </location>
</feature>
<feature type="transmembrane region" description="Helical; Name=TM3" evidence="1">
    <location>
        <begin position="105"/>
        <end position="134"/>
    </location>
</feature>
<feature type="topological domain" description="Cytoplasmic" evidence="1">
    <location>
        <begin position="135"/>
        <end position="139"/>
    </location>
</feature>
<feature type="transmembrane region" description="Helical; Name=TM4" evidence="1">
    <location>
        <begin position="140"/>
        <end position="178"/>
    </location>
</feature>
<feature type="topological domain" description="Peroxisomal matrix" evidence="1">
    <location>
        <begin position="179"/>
        <end position="243"/>
    </location>
</feature>
<feature type="transmembrane region" description="Helical; Name=TM5" evidence="1">
    <location>
        <begin position="244"/>
        <end position="271"/>
    </location>
</feature>
<feature type="topological domain" description="Cytoplasmic" evidence="1">
    <location>
        <begin position="272"/>
        <end position="353"/>
    </location>
</feature>
<feature type="zinc finger region" description="RING-type; degenerate" evidence="2">
    <location>
        <begin position="298"/>
        <end position="337"/>
    </location>
</feature>
<feature type="binding site" evidence="1">
    <location>
        <position position="298"/>
    </location>
    <ligand>
        <name>Zn(2+)</name>
        <dbReference type="ChEBI" id="CHEBI:29105"/>
    </ligand>
</feature>
<feature type="binding site" evidence="1">
    <location>
        <position position="301"/>
    </location>
    <ligand>
        <name>Zn(2+)</name>
        <dbReference type="ChEBI" id="CHEBI:29105"/>
    </ligand>
</feature>
<feature type="binding site" evidence="1">
    <location>
        <position position="319"/>
    </location>
    <ligand>
        <name>Zn(2+)</name>
        <dbReference type="ChEBI" id="CHEBI:29105"/>
    </ligand>
</feature>
<feature type="binding site" evidence="1">
    <location>
        <position position="322"/>
    </location>
    <ligand>
        <name>Zn(2+)</name>
        <dbReference type="ChEBI" id="CHEBI:29105"/>
    </ligand>
</feature>
<evidence type="ECO:0000250" key="1">
    <source>
        <dbReference type="UniProtKB" id="G2Q5N0"/>
    </source>
</evidence>
<evidence type="ECO:0000250" key="2">
    <source>
        <dbReference type="UniProtKB" id="O00623"/>
    </source>
</evidence>
<evidence type="ECO:0000250" key="3">
    <source>
        <dbReference type="UniProtKB" id="Q04370"/>
    </source>
</evidence>
<evidence type="ECO:0000255" key="4"/>
<evidence type="ECO:0000269" key="5">
    <source>
    </source>
</evidence>
<evidence type="ECO:0000305" key="6"/>
<evidence type="ECO:0000312" key="7">
    <source>
        <dbReference type="Xenbase" id="XB-GENE-6251489"/>
    </source>
</evidence>
<comment type="function">
    <text evidence="2 3 5">Component of a retrotranslocation channel required for peroxisome organization by mediating export of the PEX5 receptor from peroxisomes to the cytosol, thereby promoting PEX5 recycling (PubMed:35931083). The retrotranslocation channel is composed of PEX2, PEX10 and PEX12; each subunit contributing transmembrane segments that coassemble into an open channel that specifically allows the passage of PEX5 through the peroxisomal membrane (By similarity). PEX12 also regulates PEX5 recycling by activating the E3 ubiquitin-protein ligase activity of PEX10 (By similarity). When PEX5 recycling is compromised, PEX12 stimulates PEX10-mediated polyubiquitination of PEX5, leading to its subsequent degradation (By similarity).</text>
</comment>
<comment type="pathway">
    <text evidence="2">Protein modification; protein ubiquitination.</text>
</comment>
<comment type="subunit">
    <text evidence="2">Component of the PEX2-PEX10-PEX12 retrotranslocation channel.</text>
</comment>
<comment type="subcellular location">
    <subcellularLocation>
        <location evidence="2">Peroxisome membrane</location>
        <topology evidence="4">Multi-pass membrane protein</topology>
    </subcellularLocation>
</comment>
<comment type="domain">
    <text evidence="1">The three subunits of the retrotranslocation channel (PEX2, PEX10 and PEX12) coassemble in the membrane into a channel with an open 10 Angstrom pore. The RING-type zinc-fingers that catalyze PEX5 receptor ubiquitination are positioned above the pore on the cytosolic side of the complex.</text>
</comment>
<comment type="domain">
    <text evidence="3">The RING-type zinc-finger is degenerated and only coordinates one zinc ions, preventing E3 ubiquitin-protein ligase activity.</text>
</comment>
<comment type="similarity">
    <text evidence="6">Belongs to the pex2/pex10/pex12 family.</text>
</comment>
<accession>Q6DFK1</accession>
<reference key="1">
    <citation type="journal article" date="2016" name="Nature">
        <title>Genome evolution in the allotetraploid frog Xenopus laevis.</title>
        <authorList>
            <person name="Session A.M."/>
            <person name="Uno Y."/>
            <person name="Kwon T."/>
            <person name="Chapman J.A."/>
            <person name="Toyoda A."/>
            <person name="Takahashi S."/>
            <person name="Fukui A."/>
            <person name="Hikosaka A."/>
            <person name="Suzuki A."/>
            <person name="Kondo M."/>
            <person name="van Heeringen S.J."/>
            <person name="Quigley I."/>
            <person name="Heinz S."/>
            <person name="Ogino H."/>
            <person name="Ochi H."/>
            <person name="Hellsten U."/>
            <person name="Lyons J.B."/>
            <person name="Simakov O."/>
            <person name="Putnam N."/>
            <person name="Stites J."/>
            <person name="Kuroki Y."/>
            <person name="Tanaka T."/>
            <person name="Michiue T."/>
            <person name="Watanabe M."/>
            <person name="Bogdanovic O."/>
            <person name="Lister R."/>
            <person name="Georgiou G."/>
            <person name="Paranjpe S.S."/>
            <person name="van Kruijsbergen I."/>
            <person name="Shu S."/>
            <person name="Carlson J."/>
            <person name="Kinoshita T."/>
            <person name="Ohta Y."/>
            <person name="Mawaribuchi S."/>
            <person name="Jenkins J."/>
            <person name="Grimwood J."/>
            <person name="Schmutz J."/>
            <person name="Mitros T."/>
            <person name="Mozaffari S.V."/>
            <person name="Suzuki Y."/>
            <person name="Haramoto Y."/>
            <person name="Yamamoto T.S."/>
            <person name="Takagi C."/>
            <person name="Heald R."/>
            <person name="Miller K."/>
            <person name="Haudenschild C."/>
            <person name="Kitzman J."/>
            <person name="Nakayama T."/>
            <person name="Izutsu Y."/>
            <person name="Robert J."/>
            <person name="Fortriede J."/>
            <person name="Burns K."/>
            <person name="Lotay V."/>
            <person name="Karimi K."/>
            <person name="Yasuoka Y."/>
            <person name="Dichmann D.S."/>
            <person name="Flajnik M.F."/>
            <person name="Houston D.W."/>
            <person name="Shendure J."/>
            <person name="DuPasquier L."/>
            <person name="Vize P.D."/>
            <person name="Zorn A.M."/>
            <person name="Ito M."/>
            <person name="Marcotte E.M."/>
            <person name="Wallingford J.B."/>
            <person name="Ito Y."/>
            <person name="Asashima M."/>
            <person name="Ueno N."/>
            <person name="Matsuda Y."/>
            <person name="Veenstra G.J."/>
            <person name="Fujiyama A."/>
            <person name="Harland R.M."/>
            <person name="Taira M."/>
            <person name="Rokhsar D.S."/>
        </authorList>
    </citation>
    <scope>NUCLEOTIDE SEQUENCE [LARGE SCALE GENOMIC DNA]</scope>
    <source>
        <strain>J</strain>
    </source>
</reference>
<reference key="2">
    <citation type="submission" date="2004-07" db="EMBL/GenBank/DDBJ databases">
        <authorList>
            <consortium name="NIH - Xenopus Gene Collection (XGC) project"/>
        </authorList>
    </citation>
    <scope>NUCLEOTIDE SEQUENCE [LARGE SCALE MRNA]</scope>
    <source>
        <tissue>Embryo</tissue>
    </source>
</reference>
<reference key="3">
    <citation type="journal article" date="2022" name="Mol. Cell">
        <title>PEX5 translocation into and out of peroxisomes drives matrix protein import.</title>
        <authorList>
            <person name="Skowyra M.L."/>
            <person name="Rapoport T.A."/>
        </authorList>
    </citation>
    <scope>FUNCTION</scope>
</reference>
<dbReference type="EMBL" id="BC076735">
    <property type="protein sequence ID" value="AAH76735.1"/>
    <property type="molecule type" value="mRNA"/>
</dbReference>
<dbReference type="RefSeq" id="NP_001086511.1">
    <property type="nucleotide sequence ID" value="NM_001093042.1"/>
</dbReference>
<dbReference type="SMR" id="Q6DFK1"/>
<dbReference type="DNASU" id="446346"/>
<dbReference type="GeneID" id="446346"/>
<dbReference type="KEGG" id="xla:446346"/>
<dbReference type="AGR" id="Xenbase:XB-GENE-6251489"/>
<dbReference type="CTD" id="446346"/>
<dbReference type="Xenbase" id="XB-GENE-6251489">
    <property type="gene designation" value="pex12.L"/>
</dbReference>
<dbReference type="OrthoDB" id="107372at2759"/>
<dbReference type="UniPathway" id="UPA00143"/>
<dbReference type="Proteomes" id="UP000186698">
    <property type="component" value="Chromosome 2L"/>
</dbReference>
<dbReference type="Bgee" id="446346">
    <property type="expression patterns" value="Expressed in egg cell and 19 other cell types or tissues"/>
</dbReference>
<dbReference type="GO" id="GO:1990429">
    <property type="term" value="C:peroxisomal importomer complex"/>
    <property type="evidence" value="ECO:0000318"/>
    <property type="project" value="GO_Central"/>
</dbReference>
<dbReference type="GO" id="GO:0005778">
    <property type="term" value="C:peroxisomal membrane"/>
    <property type="evidence" value="ECO:0000318"/>
    <property type="project" value="GO_Central"/>
</dbReference>
<dbReference type="GO" id="GO:0004842">
    <property type="term" value="F:ubiquitin-protein transferase activity"/>
    <property type="evidence" value="ECO:0000318"/>
    <property type="project" value="GO_Central"/>
</dbReference>
<dbReference type="GO" id="GO:0008270">
    <property type="term" value="F:zinc ion binding"/>
    <property type="evidence" value="ECO:0007669"/>
    <property type="project" value="UniProtKB-KW"/>
</dbReference>
<dbReference type="GO" id="GO:0016558">
    <property type="term" value="P:protein import into peroxisome matrix"/>
    <property type="evidence" value="ECO:0000318"/>
    <property type="project" value="GO_Central"/>
</dbReference>
<dbReference type="GO" id="GO:0006513">
    <property type="term" value="P:protein monoubiquitination"/>
    <property type="evidence" value="ECO:0000318"/>
    <property type="project" value="GO_Central"/>
</dbReference>
<dbReference type="CDD" id="cd16451">
    <property type="entry name" value="mRING_PEX12"/>
    <property type="match status" value="1"/>
</dbReference>
<dbReference type="FunFam" id="3.30.40.10:FF:000266">
    <property type="entry name" value="Peroxisome assembly protein 12"/>
    <property type="match status" value="1"/>
</dbReference>
<dbReference type="InterPro" id="IPR017375">
    <property type="entry name" value="PEX12"/>
</dbReference>
<dbReference type="InterPro" id="IPR006845">
    <property type="entry name" value="Pex_N"/>
</dbReference>
<dbReference type="PANTHER" id="PTHR12888:SF0">
    <property type="entry name" value="PEROXISOME ASSEMBLY PROTEIN 12"/>
    <property type="match status" value="1"/>
</dbReference>
<dbReference type="PANTHER" id="PTHR12888">
    <property type="entry name" value="PEROXISOME ASSEMBLY PROTEIN 12 PEROXIN-12"/>
    <property type="match status" value="1"/>
</dbReference>
<dbReference type="Pfam" id="PF04757">
    <property type="entry name" value="Pex2_Pex12"/>
    <property type="match status" value="1"/>
</dbReference>
<dbReference type="PIRSF" id="PIRSF038074">
    <property type="entry name" value="Peroxisome_assembly_p12"/>
    <property type="match status" value="1"/>
</dbReference>
<dbReference type="SUPFAM" id="SSF57850">
    <property type="entry name" value="RING/U-box"/>
    <property type="match status" value="1"/>
</dbReference>
<gene>
    <name evidence="7" type="primary">pex12.L</name>
</gene>
<sequence>MAERGAHITTTSPLDDRPSIFEVVAQESLMAAARPALHHIVKVLAESNPARYGTLWRWFDELYTLLECLLQQHYLSWASASFSENFYGLKRVTLGKQVGQRNLARKEYWKSLLLLVLIPYLRIKLEKLVNSLREEEDYSIQNPTSFHKRCYKAILASYPFLKLGWEAWFLFYQLRYILWNGKHHSPLLRLAGVQLARLTMEDLRAMEKQEELTNTVSNVVSISQHIRSILKKALGAVTLSVSSSLSLGVFFLQFLDWWYSAENRETLKSLGNLPVPPPPIHFDLETYSPLLPKLRTVCPLCRKVRVNDTALGTSGYVFCYRCAYYYVKTHQRCPVSGYPTELQHLIKLYTPDG</sequence>
<protein>
    <recommendedName>
        <fullName evidence="6">Peroxisome assembly protein 12-B</fullName>
    </recommendedName>
    <alternativeName>
        <fullName evidence="6">Peroxin-12-B</fullName>
    </alternativeName>
</protein>
<organism>
    <name type="scientific">Xenopus laevis</name>
    <name type="common">African clawed frog</name>
    <dbReference type="NCBI Taxonomy" id="8355"/>
    <lineage>
        <taxon>Eukaryota</taxon>
        <taxon>Metazoa</taxon>
        <taxon>Chordata</taxon>
        <taxon>Craniata</taxon>
        <taxon>Vertebrata</taxon>
        <taxon>Euteleostomi</taxon>
        <taxon>Amphibia</taxon>
        <taxon>Batrachia</taxon>
        <taxon>Anura</taxon>
        <taxon>Pipoidea</taxon>
        <taxon>Pipidae</taxon>
        <taxon>Xenopodinae</taxon>
        <taxon>Xenopus</taxon>
        <taxon>Xenopus</taxon>
    </lineage>
</organism>
<name>PX12B_XENLA</name>
<proteinExistence type="evidence at transcript level"/>